<sequence>MEKVYVAGAIPEVGLKLLQEHFEVEMYEGKGLVDKDTLIKGVKNATALISLLSTNVDKDVIDAGKDLKIIANYGAGFNNIDIEYAREKSIDVTNTPKASTNATADLTIGLVLAVARRIVEGDQLSRTTGFDGWAPLFFRGREVSGKTIGIIGLGEIGSAVARRARAFDMDVLYTGPNRKEEKEREIGAKYVDLDTLLKNADFITINAAYNPKMHHLIDTEQFKMMKSTAYLINASRGPIVHEQALVQALKDNEIEGAALDVYEFEPDITDDLKSLNNVVLTPHIGNATFEARDMMSKIVANAAISAVQGEKPQFVVN</sequence>
<evidence type="ECO:0000250" key="1"/>
<evidence type="ECO:0000305" key="2"/>
<proteinExistence type="inferred from homology"/>
<gene>
    <name type="ordered locus">SAOUHSC_02577</name>
</gene>
<organism>
    <name type="scientific">Staphylococcus aureus (strain NCTC 8325 / PS 47)</name>
    <dbReference type="NCBI Taxonomy" id="93061"/>
    <lineage>
        <taxon>Bacteria</taxon>
        <taxon>Bacillati</taxon>
        <taxon>Bacillota</taxon>
        <taxon>Bacilli</taxon>
        <taxon>Bacillales</taxon>
        <taxon>Staphylococcaceae</taxon>
        <taxon>Staphylococcus</taxon>
    </lineage>
</organism>
<feature type="chain" id="PRO_0000312181" description="Putative 2-hydroxyacid dehydrogenase SAOUHSC_02577">
    <location>
        <begin position="1"/>
        <end position="317"/>
    </location>
</feature>
<feature type="active site" evidence="1">
    <location>
        <position position="236"/>
    </location>
</feature>
<feature type="active site" evidence="1">
    <location>
        <position position="265"/>
    </location>
</feature>
<feature type="active site" description="Proton donor" evidence="1">
    <location>
        <position position="283"/>
    </location>
</feature>
<feature type="binding site" evidence="1">
    <location>
        <begin position="155"/>
        <end position="156"/>
    </location>
    <ligand>
        <name>NAD(+)</name>
        <dbReference type="ChEBI" id="CHEBI:57540"/>
    </ligand>
</feature>
<feature type="binding site" evidence="1">
    <location>
        <begin position="234"/>
        <end position="236"/>
    </location>
    <ligand>
        <name>NAD(+)</name>
        <dbReference type="ChEBI" id="CHEBI:57540"/>
    </ligand>
</feature>
<feature type="binding site" evidence="1">
    <location>
        <position position="260"/>
    </location>
    <ligand>
        <name>NAD(+)</name>
        <dbReference type="ChEBI" id="CHEBI:57540"/>
    </ligand>
</feature>
<feature type="binding site" evidence="1">
    <location>
        <begin position="283"/>
        <end position="286"/>
    </location>
    <ligand>
        <name>NAD(+)</name>
        <dbReference type="ChEBI" id="CHEBI:57540"/>
    </ligand>
</feature>
<dbReference type="EC" id="1.1.1.-"/>
<dbReference type="EMBL" id="CP000253">
    <property type="protein sequence ID" value="ABD31589.1"/>
    <property type="molecule type" value="Genomic_DNA"/>
</dbReference>
<dbReference type="RefSeq" id="WP_000417016.1">
    <property type="nucleotide sequence ID" value="NZ_LS483365.1"/>
</dbReference>
<dbReference type="RefSeq" id="YP_501039.1">
    <property type="nucleotide sequence ID" value="NC_007795.1"/>
</dbReference>
<dbReference type="SMR" id="Q2FVW4"/>
<dbReference type="STRING" id="93061.SAOUHSC_02577"/>
<dbReference type="PaxDb" id="1280-SAXN108_2552"/>
<dbReference type="GeneID" id="3921574"/>
<dbReference type="KEGG" id="sao:SAOUHSC_02577"/>
<dbReference type="PATRIC" id="fig|93061.5.peg.2326"/>
<dbReference type="eggNOG" id="COG1052">
    <property type="taxonomic scope" value="Bacteria"/>
</dbReference>
<dbReference type="HOGENOM" id="CLU_019796_1_2_9"/>
<dbReference type="OrthoDB" id="9805416at2"/>
<dbReference type="PRO" id="PR:Q2FVW4"/>
<dbReference type="Proteomes" id="UP000008816">
    <property type="component" value="Chromosome"/>
</dbReference>
<dbReference type="GO" id="GO:0051287">
    <property type="term" value="F:NAD binding"/>
    <property type="evidence" value="ECO:0007669"/>
    <property type="project" value="InterPro"/>
</dbReference>
<dbReference type="GO" id="GO:0016616">
    <property type="term" value="F:oxidoreductase activity, acting on the CH-OH group of donors, NAD or NADP as acceptor"/>
    <property type="evidence" value="ECO:0007669"/>
    <property type="project" value="InterPro"/>
</dbReference>
<dbReference type="CDD" id="cd12178">
    <property type="entry name" value="2-Hacid_dh_13"/>
    <property type="match status" value="1"/>
</dbReference>
<dbReference type="FunFam" id="3.40.50.720:FF:000462">
    <property type="entry name" value="Glyoxylate reductase (NADP+)"/>
    <property type="match status" value="1"/>
</dbReference>
<dbReference type="Gene3D" id="3.40.50.720">
    <property type="entry name" value="NAD(P)-binding Rossmann-like Domain"/>
    <property type="match status" value="2"/>
</dbReference>
<dbReference type="InterPro" id="IPR050857">
    <property type="entry name" value="D-2-hydroxyacid_DH"/>
</dbReference>
<dbReference type="InterPro" id="IPR006139">
    <property type="entry name" value="D-isomer_2_OHA_DH_cat_dom"/>
</dbReference>
<dbReference type="InterPro" id="IPR006140">
    <property type="entry name" value="D-isomer_DH_NAD-bd"/>
</dbReference>
<dbReference type="InterPro" id="IPR036291">
    <property type="entry name" value="NAD(P)-bd_dom_sf"/>
</dbReference>
<dbReference type="PANTHER" id="PTHR42789">
    <property type="entry name" value="D-ISOMER SPECIFIC 2-HYDROXYACID DEHYDROGENASE FAMILY PROTEIN (AFU_ORTHOLOGUE AFUA_6G10090)"/>
    <property type="match status" value="1"/>
</dbReference>
<dbReference type="PANTHER" id="PTHR42789:SF1">
    <property type="entry name" value="D-ISOMER SPECIFIC 2-HYDROXYACID DEHYDROGENASE FAMILY PROTEIN (AFU_ORTHOLOGUE AFUA_6G10090)"/>
    <property type="match status" value="1"/>
</dbReference>
<dbReference type="Pfam" id="PF00389">
    <property type="entry name" value="2-Hacid_dh"/>
    <property type="match status" value="1"/>
</dbReference>
<dbReference type="Pfam" id="PF02826">
    <property type="entry name" value="2-Hacid_dh_C"/>
    <property type="match status" value="1"/>
</dbReference>
<dbReference type="SUPFAM" id="SSF52283">
    <property type="entry name" value="Formate/glycerate dehydrogenase catalytic domain-like"/>
    <property type="match status" value="1"/>
</dbReference>
<dbReference type="SUPFAM" id="SSF51735">
    <property type="entry name" value="NAD(P)-binding Rossmann-fold domains"/>
    <property type="match status" value="1"/>
</dbReference>
<keyword id="KW-0520">NAD</keyword>
<keyword id="KW-0560">Oxidoreductase</keyword>
<keyword id="KW-1185">Reference proteome</keyword>
<name>Y2577_STAA8</name>
<reference key="1">
    <citation type="book" date="2006" name="Gram positive pathogens, 2nd edition">
        <title>The Staphylococcus aureus NCTC 8325 genome.</title>
        <editorList>
            <person name="Fischetti V."/>
            <person name="Novick R."/>
            <person name="Ferretti J."/>
            <person name="Portnoy D."/>
            <person name="Rood J."/>
        </editorList>
        <authorList>
            <person name="Gillaspy A.F."/>
            <person name="Worrell V."/>
            <person name="Orvis J."/>
            <person name="Roe B.A."/>
            <person name="Dyer D.W."/>
            <person name="Iandolo J.J."/>
        </authorList>
    </citation>
    <scope>NUCLEOTIDE SEQUENCE [LARGE SCALE GENOMIC DNA]</scope>
    <source>
        <strain>NCTC 8325 / PS 47</strain>
    </source>
</reference>
<protein>
    <recommendedName>
        <fullName>Putative 2-hydroxyacid dehydrogenase SAOUHSC_02577</fullName>
        <ecNumber>1.1.1.-</ecNumber>
    </recommendedName>
</protein>
<comment type="similarity">
    <text evidence="2">Belongs to the D-isomer specific 2-hydroxyacid dehydrogenase family.</text>
</comment>
<accession>Q2FVW4</accession>